<feature type="chain" id="PRO_0000156770" description="CinA-like protein">
    <location>
        <begin position="1"/>
        <end position="430"/>
    </location>
</feature>
<protein>
    <recommendedName>
        <fullName evidence="1">CinA-like protein</fullName>
    </recommendedName>
</protein>
<comment type="similarity">
    <text evidence="1">Belongs to the CinA family.</text>
</comment>
<organism>
    <name type="scientific">Mycobacterium tuberculosis (strain ATCC 25618 / H37Rv)</name>
    <dbReference type="NCBI Taxonomy" id="83332"/>
    <lineage>
        <taxon>Bacteria</taxon>
        <taxon>Bacillati</taxon>
        <taxon>Actinomycetota</taxon>
        <taxon>Actinomycetes</taxon>
        <taxon>Mycobacteriales</taxon>
        <taxon>Mycobacteriaceae</taxon>
        <taxon>Mycobacterium</taxon>
        <taxon>Mycobacterium tuberculosis complex</taxon>
    </lineage>
</organism>
<name>CINAL_MYCTU</name>
<gene>
    <name evidence="1" type="primary">cinA</name>
    <name type="ordered locus">Rv1901</name>
    <name type="ORF">MTCY180.17c</name>
</gene>
<accession>P9WPE3</accession>
<accession>L0T877</accession>
<accession>O07731</accession>
<accession>P63775</accession>
<proteinExistence type="evidence at protein level"/>
<keyword id="KW-1185">Reference proteome</keyword>
<evidence type="ECO:0000255" key="1">
    <source>
        <dbReference type="HAMAP-Rule" id="MF_00226"/>
    </source>
</evidence>
<dbReference type="EMBL" id="AL123456">
    <property type="protein sequence ID" value="CCP44668.1"/>
    <property type="molecule type" value="Genomic_DNA"/>
</dbReference>
<dbReference type="PIR" id="B70518">
    <property type="entry name" value="B70518"/>
</dbReference>
<dbReference type="RefSeq" id="NP_216417.1">
    <property type="nucleotide sequence ID" value="NC_000962.3"/>
</dbReference>
<dbReference type="RefSeq" id="WP_003900426.1">
    <property type="nucleotide sequence ID" value="NZ_NVQJ01000034.1"/>
</dbReference>
<dbReference type="SMR" id="P9WPE3"/>
<dbReference type="FunCoup" id="P9WPE3">
    <property type="interactions" value="17"/>
</dbReference>
<dbReference type="STRING" id="83332.Rv1901"/>
<dbReference type="PaxDb" id="83332-Rv1901"/>
<dbReference type="DNASU" id="885149"/>
<dbReference type="GeneID" id="885149"/>
<dbReference type="KEGG" id="mtu:Rv1901"/>
<dbReference type="KEGG" id="mtv:RVBD_1901"/>
<dbReference type="TubercuList" id="Rv1901"/>
<dbReference type="eggNOG" id="COG1058">
    <property type="taxonomic scope" value="Bacteria"/>
</dbReference>
<dbReference type="eggNOG" id="COG1546">
    <property type="taxonomic scope" value="Bacteria"/>
</dbReference>
<dbReference type="InParanoid" id="P9WPE3"/>
<dbReference type="OrthoDB" id="1253990at2"/>
<dbReference type="PhylomeDB" id="P9WPE3"/>
<dbReference type="Proteomes" id="UP000001584">
    <property type="component" value="Chromosome"/>
</dbReference>
<dbReference type="GO" id="GO:0005886">
    <property type="term" value="C:plasma membrane"/>
    <property type="evidence" value="ECO:0007005"/>
    <property type="project" value="MTBBASE"/>
</dbReference>
<dbReference type="CDD" id="cd00885">
    <property type="entry name" value="cinA"/>
    <property type="match status" value="1"/>
</dbReference>
<dbReference type="FunFam" id="3.40.980.10:FF:000018">
    <property type="entry name" value="CinA-like protein"/>
    <property type="match status" value="1"/>
</dbReference>
<dbReference type="Gene3D" id="3.90.950.20">
    <property type="entry name" value="CinA-like"/>
    <property type="match status" value="1"/>
</dbReference>
<dbReference type="Gene3D" id="3.40.980.10">
    <property type="entry name" value="MoaB/Mog-like domain"/>
    <property type="match status" value="1"/>
</dbReference>
<dbReference type="HAMAP" id="MF_00226_B">
    <property type="entry name" value="CinA_B"/>
    <property type="match status" value="1"/>
</dbReference>
<dbReference type="InterPro" id="IPR050101">
    <property type="entry name" value="CinA"/>
</dbReference>
<dbReference type="InterPro" id="IPR036653">
    <property type="entry name" value="CinA-like_C"/>
</dbReference>
<dbReference type="InterPro" id="IPR008136">
    <property type="entry name" value="CinA_C"/>
</dbReference>
<dbReference type="InterPro" id="IPR008135">
    <property type="entry name" value="Competence-induced_CinA"/>
</dbReference>
<dbReference type="InterPro" id="IPR036425">
    <property type="entry name" value="MoaB/Mog-like_dom_sf"/>
</dbReference>
<dbReference type="InterPro" id="IPR001453">
    <property type="entry name" value="MoaB/Mog_dom"/>
</dbReference>
<dbReference type="NCBIfam" id="TIGR00200">
    <property type="entry name" value="cinA_nterm"/>
    <property type="match status" value="1"/>
</dbReference>
<dbReference type="NCBIfam" id="TIGR00199">
    <property type="entry name" value="PncC_domain"/>
    <property type="match status" value="1"/>
</dbReference>
<dbReference type="NCBIfam" id="NF001813">
    <property type="entry name" value="PRK00549.1"/>
    <property type="match status" value="1"/>
</dbReference>
<dbReference type="PANTHER" id="PTHR13939">
    <property type="entry name" value="NICOTINAMIDE-NUCLEOTIDE AMIDOHYDROLASE PNCC"/>
    <property type="match status" value="1"/>
</dbReference>
<dbReference type="PANTHER" id="PTHR13939:SF0">
    <property type="entry name" value="NMN AMIDOHYDROLASE-LIKE PROTEIN YFAY"/>
    <property type="match status" value="1"/>
</dbReference>
<dbReference type="Pfam" id="PF02464">
    <property type="entry name" value="CinA"/>
    <property type="match status" value="1"/>
</dbReference>
<dbReference type="Pfam" id="PF00994">
    <property type="entry name" value="MoCF_biosynth"/>
    <property type="match status" value="1"/>
</dbReference>
<dbReference type="PIRSF" id="PIRSF006728">
    <property type="entry name" value="CinA"/>
    <property type="match status" value="1"/>
</dbReference>
<dbReference type="SMART" id="SM00852">
    <property type="entry name" value="MoCF_biosynth"/>
    <property type="match status" value="1"/>
</dbReference>
<dbReference type="SUPFAM" id="SSF142433">
    <property type="entry name" value="CinA-like"/>
    <property type="match status" value="1"/>
</dbReference>
<dbReference type="SUPFAM" id="SSF53218">
    <property type="entry name" value="Molybdenum cofactor biosynthesis proteins"/>
    <property type="match status" value="1"/>
</dbReference>
<sequence length="430" mass="45512">MAVSARAGIVITGTEVLTGRVQDRNGPWIADRLLELGVELAHITICGDRPADIEAQLRFMAEQGVDLIVTSGGLGPTADDMTVEVVARYCGRELVLDDELENRIANILKKLMGRNPAIEPANFDSIRAANRKQAMIPAGSQVIDPVGTAPGLVVPGRPAVMVLPGPPRELQPIWSKAIQTAPVQDAIAGRTTYRQETIRIFGLPESSLADTLRDAEAAIPGFDLVEITTCLRRGEIEMVTRFEPNAAQVYTQLARLLRDRHGHQVYSEDGASVDELVAKLLTGRRIATAESCTAGLLAARLTDRPGSSKYVAGAVVAYSNEAKAQLLGVDPALIEAHGAVSEPVAQAMAAGALQGFGADTATAITGIAGPSGGTPEKPVGTVCFTVLLDDGRTTTRTVRLPGNRSDIRERSTTVAMHLLRRTLSGIPGSP</sequence>
<reference key="1">
    <citation type="journal article" date="1998" name="Nature">
        <title>Deciphering the biology of Mycobacterium tuberculosis from the complete genome sequence.</title>
        <authorList>
            <person name="Cole S.T."/>
            <person name="Brosch R."/>
            <person name="Parkhill J."/>
            <person name="Garnier T."/>
            <person name="Churcher C.M."/>
            <person name="Harris D.E."/>
            <person name="Gordon S.V."/>
            <person name="Eiglmeier K."/>
            <person name="Gas S."/>
            <person name="Barry C.E. III"/>
            <person name="Tekaia F."/>
            <person name="Badcock K."/>
            <person name="Basham D."/>
            <person name="Brown D."/>
            <person name="Chillingworth T."/>
            <person name="Connor R."/>
            <person name="Davies R.M."/>
            <person name="Devlin K."/>
            <person name="Feltwell T."/>
            <person name="Gentles S."/>
            <person name="Hamlin N."/>
            <person name="Holroyd S."/>
            <person name="Hornsby T."/>
            <person name="Jagels K."/>
            <person name="Krogh A."/>
            <person name="McLean J."/>
            <person name="Moule S."/>
            <person name="Murphy L.D."/>
            <person name="Oliver S."/>
            <person name="Osborne J."/>
            <person name="Quail M.A."/>
            <person name="Rajandream M.A."/>
            <person name="Rogers J."/>
            <person name="Rutter S."/>
            <person name="Seeger K."/>
            <person name="Skelton S."/>
            <person name="Squares S."/>
            <person name="Squares R."/>
            <person name="Sulston J.E."/>
            <person name="Taylor K."/>
            <person name="Whitehead S."/>
            <person name="Barrell B.G."/>
        </authorList>
    </citation>
    <scope>NUCLEOTIDE SEQUENCE [LARGE SCALE GENOMIC DNA]</scope>
    <source>
        <strain>ATCC 25618 / H37Rv</strain>
    </source>
</reference>
<reference key="2">
    <citation type="journal article" date="2011" name="Mol. Cell. Proteomics">
        <title>Proteogenomic analysis of Mycobacterium tuberculosis by high resolution mass spectrometry.</title>
        <authorList>
            <person name="Kelkar D.S."/>
            <person name="Kumar D."/>
            <person name="Kumar P."/>
            <person name="Balakrishnan L."/>
            <person name="Muthusamy B."/>
            <person name="Yadav A.K."/>
            <person name="Shrivastava P."/>
            <person name="Marimuthu A."/>
            <person name="Anand S."/>
            <person name="Sundaram H."/>
            <person name="Kingsbury R."/>
            <person name="Harsha H.C."/>
            <person name="Nair B."/>
            <person name="Prasad T.S."/>
            <person name="Chauhan D.S."/>
            <person name="Katoch K."/>
            <person name="Katoch V.M."/>
            <person name="Kumar P."/>
            <person name="Chaerkady R."/>
            <person name="Ramachandran S."/>
            <person name="Dash D."/>
            <person name="Pandey A."/>
        </authorList>
    </citation>
    <scope>IDENTIFICATION BY MASS SPECTROMETRY [LARGE SCALE ANALYSIS]</scope>
    <source>
        <strain>ATCC 25618 / H37Rv</strain>
    </source>
</reference>